<evidence type="ECO:0000255" key="1">
    <source>
        <dbReference type="HAMAP-Rule" id="MF_00711"/>
    </source>
</evidence>
<gene>
    <name evidence="1" type="primary">gcvP</name>
    <name type="ordered locus">YPDSF_0609</name>
</gene>
<feature type="chain" id="PRO_1000045632" description="Glycine dehydrogenase (decarboxylating)">
    <location>
        <begin position="1"/>
        <end position="959"/>
    </location>
</feature>
<feature type="modified residue" description="N6-(pyridoxal phosphate)lysine" evidence="1">
    <location>
        <position position="708"/>
    </location>
</feature>
<dbReference type="EC" id="1.4.4.2" evidence="1"/>
<dbReference type="EMBL" id="CP000668">
    <property type="protein sequence ID" value="ABP39019.1"/>
    <property type="molecule type" value="Genomic_DNA"/>
</dbReference>
<dbReference type="RefSeq" id="WP_002209947.1">
    <property type="nucleotide sequence ID" value="NZ_CP009715.1"/>
</dbReference>
<dbReference type="SMR" id="A4TIA7"/>
<dbReference type="GeneID" id="57973735"/>
<dbReference type="KEGG" id="ypp:YPDSF_0609"/>
<dbReference type="PATRIC" id="fig|386656.14.peg.1928"/>
<dbReference type="GO" id="GO:0005829">
    <property type="term" value="C:cytosol"/>
    <property type="evidence" value="ECO:0007669"/>
    <property type="project" value="TreeGrafter"/>
</dbReference>
<dbReference type="GO" id="GO:0005960">
    <property type="term" value="C:glycine cleavage complex"/>
    <property type="evidence" value="ECO:0007669"/>
    <property type="project" value="TreeGrafter"/>
</dbReference>
<dbReference type="GO" id="GO:0016594">
    <property type="term" value="F:glycine binding"/>
    <property type="evidence" value="ECO:0007669"/>
    <property type="project" value="TreeGrafter"/>
</dbReference>
<dbReference type="GO" id="GO:0004375">
    <property type="term" value="F:glycine dehydrogenase (decarboxylating) activity"/>
    <property type="evidence" value="ECO:0007669"/>
    <property type="project" value="UniProtKB-EC"/>
</dbReference>
<dbReference type="GO" id="GO:0030170">
    <property type="term" value="F:pyridoxal phosphate binding"/>
    <property type="evidence" value="ECO:0007669"/>
    <property type="project" value="TreeGrafter"/>
</dbReference>
<dbReference type="GO" id="GO:0019464">
    <property type="term" value="P:glycine decarboxylation via glycine cleavage system"/>
    <property type="evidence" value="ECO:0007669"/>
    <property type="project" value="UniProtKB-UniRule"/>
</dbReference>
<dbReference type="CDD" id="cd00613">
    <property type="entry name" value="GDC-P"/>
    <property type="match status" value="2"/>
</dbReference>
<dbReference type="FunFam" id="3.40.640.10:FF:000005">
    <property type="entry name" value="Glycine dehydrogenase (decarboxylating), mitochondrial"/>
    <property type="match status" value="1"/>
</dbReference>
<dbReference type="FunFam" id="3.90.1150.10:FF:000007">
    <property type="entry name" value="Glycine dehydrogenase (decarboxylating), mitochondrial"/>
    <property type="match status" value="1"/>
</dbReference>
<dbReference type="FunFam" id="3.40.640.10:FF:000007">
    <property type="entry name" value="glycine dehydrogenase (Decarboxylating), mitochondrial"/>
    <property type="match status" value="1"/>
</dbReference>
<dbReference type="Gene3D" id="3.90.1150.10">
    <property type="entry name" value="Aspartate Aminotransferase, domain 1"/>
    <property type="match status" value="2"/>
</dbReference>
<dbReference type="Gene3D" id="3.40.640.10">
    <property type="entry name" value="Type I PLP-dependent aspartate aminotransferase-like (Major domain)"/>
    <property type="match status" value="2"/>
</dbReference>
<dbReference type="HAMAP" id="MF_00711">
    <property type="entry name" value="GcvP"/>
    <property type="match status" value="1"/>
</dbReference>
<dbReference type="InterPro" id="IPR003437">
    <property type="entry name" value="GcvP"/>
</dbReference>
<dbReference type="InterPro" id="IPR049316">
    <property type="entry name" value="GDC-P_C"/>
</dbReference>
<dbReference type="InterPro" id="IPR049315">
    <property type="entry name" value="GDC-P_N"/>
</dbReference>
<dbReference type="InterPro" id="IPR020581">
    <property type="entry name" value="GDC_P"/>
</dbReference>
<dbReference type="InterPro" id="IPR015424">
    <property type="entry name" value="PyrdxlP-dep_Trfase"/>
</dbReference>
<dbReference type="InterPro" id="IPR015421">
    <property type="entry name" value="PyrdxlP-dep_Trfase_major"/>
</dbReference>
<dbReference type="InterPro" id="IPR015422">
    <property type="entry name" value="PyrdxlP-dep_Trfase_small"/>
</dbReference>
<dbReference type="NCBIfam" id="TIGR00461">
    <property type="entry name" value="gcvP"/>
    <property type="match status" value="1"/>
</dbReference>
<dbReference type="NCBIfam" id="NF003346">
    <property type="entry name" value="PRK04366.1"/>
    <property type="match status" value="1"/>
</dbReference>
<dbReference type="PANTHER" id="PTHR11773:SF13">
    <property type="entry name" value="GLYCINE DEHYDROGENASE (DECARBOXYLATING)"/>
    <property type="match status" value="1"/>
</dbReference>
<dbReference type="PANTHER" id="PTHR11773">
    <property type="entry name" value="GLYCINE DEHYDROGENASE, DECARBOXYLATING"/>
    <property type="match status" value="1"/>
</dbReference>
<dbReference type="Pfam" id="PF21478">
    <property type="entry name" value="GcvP2_C"/>
    <property type="match status" value="1"/>
</dbReference>
<dbReference type="Pfam" id="PF02347">
    <property type="entry name" value="GDC-P"/>
    <property type="match status" value="2"/>
</dbReference>
<dbReference type="SUPFAM" id="SSF53383">
    <property type="entry name" value="PLP-dependent transferases"/>
    <property type="match status" value="2"/>
</dbReference>
<reference key="1">
    <citation type="submission" date="2007-02" db="EMBL/GenBank/DDBJ databases">
        <title>Complete sequence of chromosome of Yersinia pestis Pestoides F.</title>
        <authorList>
            <consortium name="US DOE Joint Genome Institute"/>
            <person name="Copeland A."/>
            <person name="Lucas S."/>
            <person name="Lapidus A."/>
            <person name="Barry K."/>
            <person name="Detter J.C."/>
            <person name="Glavina del Rio T."/>
            <person name="Hammon N."/>
            <person name="Israni S."/>
            <person name="Dalin E."/>
            <person name="Tice H."/>
            <person name="Pitluck S."/>
            <person name="Di Bartolo G."/>
            <person name="Chain P."/>
            <person name="Malfatti S."/>
            <person name="Shin M."/>
            <person name="Vergez L."/>
            <person name="Schmutz J."/>
            <person name="Larimer F."/>
            <person name="Land M."/>
            <person name="Hauser L."/>
            <person name="Worsham P."/>
            <person name="Chu M."/>
            <person name="Bearden S."/>
            <person name="Garcia E."/>
            <person name="Richardson P."/>
        </authorList>
    </citation>
    <scope>NUCLEOTIDE SEQUENCE [LARGE SCALE GENOMIC DNA]</scope>
    <source>
        <strain>Pestoides F</strain>
    </source>
</reference>
<proteinExistence type="inferred from homology"/>
<accession>A4TIA7</accession>
<protein>
    <recommendedName>
        <fullName evidence="1">Glycine dehydrogenase (decarboxylating)</fullName>
        <ecNumber evidence="1">1.4.4.2</ecNumber>
    </recommendedName>
    <alternativeName>
        <fullName evidence="1">Glycine cleavage system P-protein</fullName>
    </alternativeName>
    <alternativeName>
        <fullName evidence="1">Glycine decarboxylase</fullName>
    </alternativeName>
    <alternativeName>
        <fullName evidence="1">Glycine dehydrogenase (aminomethyl-transferring)</fullName>
    </alternativeName>
</protein>
<keyword id="KW-0560">Oxidoreductase</keyword>
<keyword id="KW-0663">Pyridoxal phosphate</keyword>
<name>GCSP_YERPP</name>
<comment type="function">
    <text evidence="1">The glycine cleavage system catalyzes the degradation of glycine. The P protein binds the alpha-amino group of glycine through its pyridoxal phosphate cofactor; CO(2) is released and the remaining methylamine moiety is then transferred to the lipoamide cofactor of the H protein.</text>
</comment>
<comment type="catalytic activity">
    <reaction evidence="1">
        <text>N(6)-[(R)-lipoyl]-L-lysyl-[glycine-cleavage complex H protein] + glycine + H(+) = N(6)-[(R)-S(8)-aminomethyldihydrolipoyl]-L-lysyl-[glycine-cleavage complex H protein] + CO2</text>
        <dbReference type="Rhea" id="RHEA:24304"/>
        <dbReference type="Rhea" id="RHEA-COMP:10494"/>
        <dbReference type="Rhea" id="RHEA-COMP:10495"/>
        <dbReference type="ChEBI" id="CHEBI:15378"/>
        <dbReference type="ChEBI" id="CHEBI:16526"/>
        <dbReference type="ChEBI" id="CHEBI:57305"/>
        <dbReference type="ChEBI" id="CHEBI:83099"/>
        <dbReference type="ChEBI" id="CHEBI:83143"/>
        <dbReference type="EC" id="1.4.4.2"/>
    </reaction>
</comment>
<comment type="cofactor">
    <cofactor evidence="1">
        <name>pyridoxal 5'-phosphate</name>
        <dbReference type="ChEBI" id="CHEBI:597326"/>
    </cofactor>
</comment>
<comment type="subunit">
    <text evidence="1">The glycine cleavage system is composed of four proteins: P, T, L and H.</text>
</comment>
<comment type="similarity">
    <text evidence="1">Belongs to the GcvP family.</text>
</comment>
<organism>
    <name type="scientific">Yersinia pestis (strain Pestoides F)</name>
    <dbReference type="NCBI Taxonomy" id="386656"/>
    <lineage>
        <taxon>Bacteria</taxon>
        <taxon>Pseudomonadati</taxon>
        <taxon>Pseudomonadota</taxon>
        <taxon>Gammaproteobacteria</taxon>
        <taxon>Enterobacterales</taxon>
        <taxon>Yersiniaceae</taxon>
        <taxon>Yersinia</taxon>
    </lineage>
</organism>
<sequence length="959" mass="104737">MTQNLSQLEHNDAFIQRHIGSSVEQQQQMLAAVGASSLSTLIQQIVPADIQLPGPPPVGEAATEHQALAELKGIASQNQCYKSYIGMGYSPVLTPPVILRNMLENPGWYTAYTPYQPEVSQGRLEALLNFQQLTQDLTGLDLASASLLDEATAAAESMALAKRASKLKDANRFFVADDVHPQTLDVVLTRAETFGFDVIVDRAEKVLELDGIFGVLLQQVGTTGELHDYSALLAELKKRKIITSVAADIMALVLLTAPGAQGADVVFGSAQRFGVPMGYGGPHAAFFACRDEFKRSMPGRIIGVSRDAAGNTALRMAMQTREQHIRREKANSNICTSQVLLANIASLYAVYHGPQGLQRIAGRIHRMTDILAAGLQHAGLTLRFKHWFDTLTVEVKDKAAVLARALSFGINLRTDIHGAVGITLNETTSREDIQTLFALFVGDNHGLDIDQLDAAVSQHSQSIQDSMLRRDPILTHPVFNRYHSETEMMRYMHRLERKDLALNQAMIPLGSCTMKLNAAAEMIPITWPEFAELHPFCPPEQAAGYQQMIGQLSQWLVQLTGYDAVCMQPNSGAQGEYAGLLAIRRYHESRNQANRHICLIPSSAHGTNPASAQMAGMSVVVVACDKQGNIDLHDLRQKAEHAGDELSCIMVTYPSTHGVYEETIREVCQIVHQFGGQVYLDGANMNAQVGITTPGYIGADVSHLNLHKTFCIPHGGGGPGMGPIGVKAHLAPFVPGHSVVQIDGMTTQQGAVSAAPFGSASILPISWMYIRMMGADGLKQASQVAILNANYIATRLKNAYPVLYTGHDGRVAHECILDIRPLKEATGISEMDIAKRLIDFGFHAPTMSFPVAGTLMVEPTESESKVELDRFIDAMLAIRAEIEKVAQGEWPLEDNPLVNAPHTQAELVGEWTHPYSRELAVFPVAGVLENKYWPTVKRLDDVYGDRNLFCSCVPISDYE</sequence>